<comment type="function">
    <text evidence="1">Catalyzes the complicated ring closure reaction between the two acyclic compounds 1-deoxy-D-xylulose-5-phosphate (DXP) and 3-amino-2-oxopropyl phosphate (1-amino-acetone-3-phosphate or AAP) to form pyridoxine 5'-phosphate (PNP) and inorganic phosphate.</text>
</comment>
<comment type="catalytic activity">
    <reaction evidence="1">
        <text>3-amino-2-oxopropyl phosphate + 1-deoxy-D-xylulose 5-phosphate = pyridoxine 5'-phosphate + phosphate + 2 H2O + H(+)</text>
        <dbReference type="Rhea" id="RHEA:15265"/>
        <dbReference type="ChEBI" id="CHEBI:15377"/>
        <dbReference type="ChEBI" id="CHEBI:15378"/>
        <dbReference type="ChEBI" id="CHEBI:43474"/>
        <dbReference type="ChEBI" id="CHEBI:57279"/>
        <dbReference type="ChEBI" id="CHEBI:57792"/>
        <dbReference type="ChEBI" id="CHEBI:58589"/>
        <dbReference type="EC" id="2.6.99.2"/>
    </reaction>
</comment>
<comment type="pathway">
    <text evidence="1">Cofactor biosynthesis; pyridoxine 5'-phosphate biosynthesis; pyridoxine 5'-phosphate from D-erythrose 4-phosphate: step 5/5.</text>
</comment>
<comment type="subunit">
    <text evidence="1">Homooctamer; tetramer of dimers.</text>
</comment>
<comment type="subcellular location">
    <subcellularLocation>
        <location evidence="1">Cytoplasm</location>
    </subcellularLocation>
</comment>
<comment type="similarity">
    <text evidence="1">Belongs to the PNP synthase family.</text>
</comment>
<evidence type="ECO:0000255" key="1">
    <source>
        <dbReference type="HAMAP-Rule" id="MF_00279"/>
    </source>
</evidence>
<feature type="chain" id="PRO_1000132549" description="Pyridoxine 5'-phosphate synthase">
    <location>
        <begin position="1"/>
        <end position="239"/>
    </location>
</feature>
<feature type="active site" description="Proton acceptor" evidence="1">
    <location>
        <position position="43"/>
    </location>
</feature>
<feature type="active site" description="Proton acceptor" evidence="1">
    <location>
        <position position="70"/>
    </location>
</feature>
<feature type="active site" description="Proton donor" evidence="1">
    <location>
        <position position="191"/>
    </location>
</feature>
<feature type="binding site" evidence="1">
    <location>
        <position position="7"/>
    </location>
    <ligand>
        <name>3-amino-2-oxopropyl phosphate</name>
        <dbReference type="ChEBI" id="CHEBI:57279"/>
    </ligand>
</feature>
<feature type="binding site" evidence="1">
    <location>
        <begin position="9"/>
        <end position="10"/>
    </location>
    <ligand>
        <name>1-deoxy-D-xylulose 5-phosphate</name>
        <dbReference type="ChEBI" id="CHEBI:57792"/>
    </ligand>
</feature>
<feature type="binding site" evidence="1">
    <location>
        <position position="18"/>
    </location>
    <ligand>
        <name>3-amino-2-oxopropyl phosphate</name>
        <dbReference type="ChEBI" id="CHEBI:57279"/>
    </ligand>
</feature>
<feature type="binding site" evidence="1">
    <location>
        <position position="45"/>
    </location>
    <ligand>
        <name>1-deoxy-D-xylulose 5-phosphate</name>
        <dbReference type="ChEBI" id="CHEBI:57792"/>
    </ligand>
</feature>
<feature type="binding site" evidence="1">
    <location>
        <position position="50"/>
    </location>
    <ligand>
        <name>1-deoxy-D-xylulose 5-phosphate</name>
        <dbReference type="ChEBI" id="CHEBI:57792"/>
    </ligand>
</feature>
<feature type="binding site" evidence="1">
    <location>
        <position position="100"/>
    </location>
    <ligand>
        <name>1-deoxy-D-xylulose 5-phosphate</name>
        <dbReference type="ChEBI" id="CHEBI:57792"/>
    </ligand>
</feature>
<feature type="binding site" evidence="1">
    <location>
        <position position="192"/>
    </location>
    <ligand>
        <name>3-amino-2-oxopropyl phosphate</name>
        <dbReference type="ChEBI" id="CHEBI:57279"/>
    </ligand>
</feature>
<feature type="binding site" evidence="1">
    <location>
        <begin position="213"/>
        <end position="214"/>
    </location>
    <ligand>
        <name>3-amino-2-oxopropyl phosphate</name>
        <dbReference type="ChEBI" id="CHEBI:57279"/>
    </ligand>
</feature>
<feature type="site" description="Transition state stabilizer" evidence="1">
    <location>
        <position position="151"/>
    </location>
</feature>
<keyword id="KW-0963">Cytoplasm</keyword>
<keyword id="KW-0664">Pyridoxine biosynthesis</keyword>
<keyword id="KW-1185">Reference proteome</keyword>
<keyword id="KW-0808">Transferase</keyword>
<name>PDXJ_GEODF</name>
<sequence length="239" mass="25871">MARLGVNIDHVATIRQARGGAEPDPVAAAAIAELAGADGITIHLREDRRHIQDRDLRLLRQTIKTRLNLEMAATDEMVSIALSVKPDMCTLVPEKRQELTTEGGLDVRLHLDAIRGAVQKLQDGGLIVSLFIDPDTDQIKAADKSGADYIEIHTGAFAEASDWKAEQEELKKIENAIKLAGKLGLGVNAGHGLNYSNIRKVAALGGIEEYNIGHSIISKAVLVGLDRAVRDMVDLVKYS</sequence>
<organism>
    <name type="scientific">Geotalea daltonii (strain DSM 22248 / JCM 15807 / FRC-32)</name>
    <name type="common">Geobacter daltonii</name>
    <dbReference type="NCBI Taxonomy" id="316067"/>
    <lineage>
        <taxon>Bacteria</taxon>
        <taxon>Pseudomonadati</taxon>
        <taxon>Thermodesulfobacteriota</taxon>
        <taxon>Desulfuromonadia</taxon>
        <taxon>Geobacterales</taxon>
        <taxon>Geobacteraceae</taxon>
        <taxon>Geotalea</taxon>
    </lineage>
</organism>
<reference key="1">
    <citation type="submission" date="2009-01" db="EMBL/GenBank/DDBJ databases">
        <title>Complete sequence of Geobacter sp. FRC-32.</title>
        <authorList>
            <consortium name="US DOE Joint Genome Institute"/>
            <person name="Lucas S."/>
            <person name="Copeland A."/>
            <person name="Lapidus A."/>
            <person name="Glavina del Rio T."/>
            <person name="Dalin E."/>
            <person name="Tice H."/>
            <person name="Bruce D."/>
            <person name="Goodwin L."/>
            <person name="Pitluck S."/>
            <person name="Saunders E."/>
            <person name="Brettin T."/>
            <person name="Detter J.C."/>
            <person name="Han C."/>
            <person name="Larimer F."/>
            <person name="Land M."/>
            <person name="Hauser L."/>
            <person name="Kyrpides N."/>
            <person name="Ovchinnikova G."/>
            <person name="Kostka J."/>
            <person name="Richardson P."/>
        </authorList>
    </citation>
    <scope>NUCLEOTIDE SEQUENCE [LARGE SCALE GENOMIC DNA]</scope>
    <source>
        <strain>DSM 22248 / JCM 15807 / FRC-32</strain>
    </source>
</reference>
<proteinExistence type="inferred from homology"/>
<accession>B9M5K2</accession>
<dbReference type="EC" id="2.6.99.2" evidence="1"/>
<dbReference type="EMBL" id="CP001390">
    <property type="protein sequence ID" value="ACM21761.1"/>
    <property type="molecule type" value="Genomic_DNA"/>
</dbReference>
<dbReference type="RefSeq" id="WP_012648489.1">
    <property type="nucleotide sequence ID" value="NC_011979.1"/>
</dbReference>
<dbReference type="SMR" id="B9M5K2"/>
<dbReference type="STRING" id="316067.Geob_3418"/>
<dbReference type="KEGG" id="geo:Geob_3418"/>
<dbReference type="eggNOG" id="COG0854">
    <property type="taxonomic scope" value="Bacteria"/>
</dbReference>
<dbReference type="HOGENOM" id="CLU_074563_0_0_7"/>
<dbReference type="OrthoDB" id="9806590at2"/>
<dbReference type="UniPathway" id="UPA00244">
    <property type="reaction ID" value="UER00313"/>
</dbReference>
<dbReference type="Proteomes" id="UP000007721">
    <property type="component" value="Chromosome"/>
</dbReference>
<dbReference type="GO" id="GO:0005829">
    <property type="term" value="C:cytosol"/>
    <property type="evidence" value="ECO:0007669"/>
    <property type="project" value="TreeGrafter"/>
</dbReference>
<dbReference type="GO" id="GO:0033856">
    <property type="term" value="F:pyridoxine 5'-phosphate synthase activity"/>
    <property type="evidence" value="ECO:0007669"/>
    <property type="project" value="UniProtKB-EC"/>
</dbReference>
<dbReference type="GO" id="GO:0008615">
    <property type="term" value="P:pyridoxine biosynthetic process"/>
    <property type="evidence" value="ECO:0007669"/>
    <property type="project" value="UniProtKB-UniRule"/>
</dbReference>
<dbReference type="CDD" id="cd00003">
    <property type="entry name" value="PNPsynthase"/>
    <property type="match status" value="1"/>
</dbReference>
<dbReference type="FunFam" id="3.20.20.70:FF:000042">
    <property type="entry name" value="Pyridoxine 5'-phosphate synthase"/>
    <property type="match status" value="1"/>
</dbReference>
<dbReference type="Gene3D" id="3.20.20.70">
    <property type="entry name" value="Aldolase class I"/>
    <property type="match status" value="1"/>
</dbReference>
<dbReference type="HAMAP" id="MF_00279">
    <property type="entry name" value="PdxJ"/>
    <property type="match status" value="1"/>
</dbReference>
<dbReference type="InterPro" id="IPR013785">
    <property type="entry name" value="Aldolase_TIM"/>
</dbReference>
<dbReference type="InterPro" id="IPR004569">
    <property type="entry name" value="PyrdxlP_synth_PdxJ"/>
</dbReference>
<dbReference type="InterPro" id="IPR036130">
    <property type="entry name" value="Pyridoxine-5'_phos_synth"/>
</dbReference>
<dbReference type="NCBIfam" id="TIGR00559">
    <property type="entry name" value="pdxJ"/>
    <property type="match status" value="1"/>
</dbReference>
<dbReference type="NCBIfam" id="NF003623">
    <property type="entry name" value="PRK05265.1-1"/>
    <property type="match status" value="1"/>
</dbReference>
<dbReference type="NCBIfam" id="NF003625">
    <property type="entry name" value="PRK05265.1-3"/>
    <property type="match status" value="1"/>
</dbReference>
<dbReference type="NCBIfam" id="NF003627">
    <property type="entry name" value="PRK05265.1-5"/>
    <property type="match status" value="1"/>
</dbReference>
<dbReference type="PANTHER" id="PTHR30456">
    <property type="entry name" value="PYRIDOXINE 5'-PHOSPHATE SYNTHASE"/>
    <property type="match status" value="1"/>
</dbReference>
<dbReference type="PANTHER" id="PTHR30456:SF0">
    <property type="entry name" value="PYRIDOXINE 5'-PHOSPHATE SYNTHASE"/>
    <property type="match status" value="1"/>
</dbReference>
<dbReference type="Pfam" id="PF03740">
    <property type="entry name" value="PdxJ"/>
    <property type="match status" value="1"/>
</dbReference>
<dbReference type="SUPFAM" id="SSF63892">
    <property type="entry name" value="Pyridoxine 5'-phosphate synthase"/>
    <property type="match status" value="1"/>
</dbReference>
<protein>
    <recommendedName>
        <fullName evidence="1">Pyridoxine 5'-phosphate synthase</fullName>
        <shortName evidence="1">PNP synthase</shortName>
        <ecNumber evidence="1">2.6.99.2</ecNumber>
    </recommendedName>
</protein>
<gene>
    <name evidence="1" type="primary">pdxJ</name>
    <name type="ordered locus">Geob_3418</name>
</gene>